<keyword id="KW-0131">Cell cycle</keyword>
<keyword id="KW-0132">Cell division</keyword>
<keyword id="KW-0997">Cell inner membrane</keyword>
<keyword id="KW-1003">Cell membrane</keyword>
<keyword id="KW-0133">Cell shape</keyword>
<keyword id="KW-0961">Cell wall biogenesis/degradation</keyword>
<keyword id="KW-0460">Magnesium</keyword>
<keyword id="KW-0472">Membrane</keyword>
<keyword id="KW-0479">Metal-binding</keyword>
<keyword id="KW-0573">Peptidoglycan synthesis</keyword>
<keyword id="KW-0808">Transferase</keyword>
<keyword id="KW-0812">Transmembrane</keyword>
<keyword id="KW-1133">Transmembrane helix</keyword>
<dbReference type="EC" id="2.7.8.13" evidence="1"/>
<dbReference type="EMBL" id="AM181176">
    <property type="protein sequence ID" value="CAY47210.1"/>
    <property type="molecule type" value="Genomic_DNA"/>
</dbReference>
<dbReference type="RefSeq" id="WP_012722293.1">
    <property type="nucleotide sequence ID" value="NC_012660.1"/>
</dbReference>
<dbReference type="SMR" id="C3KCS7"/>
<dbReference type="STRING" id="294.SRM1_04724"/>
<dbReference type="PATRIC" id="fig|216595.4.peg.1180"/>
<dbReference type="eggNOG" id="COG0472">
    <property type="taxonomic scope" value="Bacteria"/>
</dbReference>
<dbReference type="HOGENOM" id="CLU_023982_0_0_6"/>
<dbReference type="OrthoDB" id="9805475at2"/>
<dbReference type="UniPathway" id="UPA00219"/>
<dbReference type="GO" id="GO:0005886">
    <property type="term" value="C:plasma membrane"/>
    <property type="evidence" value="ECO:0007669"/>
    <property type="project" value="UniProtKB-SubCell"/>
</dbReference>
<dbReference type="GO" id="GO:0046872">
    <property type="term" value="F:metal ion binding"/>
    <property type="evidence" value="ECO:0007669"/>
    <property type="project" value="UniProtKB-KW"/>
</dbReference>
<dbReference type="GO" id="GO:0008963">
    <property type="term" value="F:phospho-N-acetylmuramoyl-pentapeptide-transferase activity"/>
    <property type="evidence" value="ECO:0007669"/>
    <property type="project" value="UniProtKB-UniRule"/>
</dbReference>
<dbReference type="GO" id="GO:0051992">
    <property type="term" value="F:UDP-N-acetylmuramoyl-L-alanyl-D-glutamyl-meso-2,6-diaminopimelyl-D-alanyl-D-alanine:undecaprenyl-phosphate transferase activity"/>
    <property type="evidence" value="ECO:0007669"/>
    <property type="project" value="RHEA"/>
</dbReference>
<dbReference type="GO" id="GO:0051301">
    <property type="term" value="P:cell division"/>
    <property type="evidence" value="ECO:0007669"/>
    <property type="project" value="UniProtKB-KW"/>
</dbReference>
<dbReference type="GO" id="GO:0071555">
    <property type="term" value="P:cell wall organization"/>
    <property type="evidence" value="ECO:0007669"/>
    <property type="project" value="UniProtKB-KW"/>
</dbReference>
<dbReference type="GO" id="GO:0009252">
    <property type="term" value="P:peptidoglycan biosynthetic process"/>
    <property type="evidence" value="ECO:0007669"/>
    <property type="project" value="UniProtKB-UniRule"/>
</dbReference>
<dbReference type="GO" id="GO:0008360">
    <property type="term" value="P:regulation of cell shape"/>
    <property type="evidence" value="ECO:0007669"/>
    <property type="project" value="UniProtKB-KW"/>
</dbReference>
<dbReference type="CDD" id="cd06852">
    <property type="entry name" value="GT_MraY"/>
    <property type="match status" value="1"/>
</dbReference>
<dbReference type="HAMAP" id="MF_00038">
    <property type="entry name" value="MraY"/>
    <property type="match status" value="1"/>
</dbReference>
<dbReference type="InterPro" id="IPR000715">
    <property type="entry name" value="Glycosyl_transferase_4"/>
</dbReference>
<dbReference type="InterPro" id="IPR003524">
    <property type="entry name" value="PNAcMuramoyl-5peptid_Trfase"/>
</dbReference>
<dbReference type="InterPro" id="IPR018480">
    <property type="entry name" value="PNAcMuramoyl-5peptid_Trfase_CS"/>
</dbReference>
<dbReference type="NCBIfam" id="TIGR00445">
    <property type="entry name" value="mraY"/>
    <property type="match status" value="1"/>
</dbReference>
<dbReference type="PANTHER" id="PTHR22926">
    <property type="entry name" value="PHOSPHO-N-ACETYLMURAMOYL-PENTAPEPTIDE-TRANSFERASE"/>
    <property type="match status" value="1"/>
</dbReference>
<dbReference type="PANTHER" id="PTHR22926:SF5">
    <property type="entry name" value="PHOSPHO-N-ACETYLMURAMOYL-PENTAPEPTIDE-TRANSFERASE HOMOLOG"/>
    <property type="match status" value="1"/>
</dbReference>
<dbReference type="Pfam" id="PF00953">
    <property type="entry name" value="Glycos_transf_4"/>
    <property type="match status" value="1"/>
</dbReference>
<dbReference type="Pfam" id="PF10555">
    <property type="entry name" value="MraY_sig1"/>
    <property type="match status" value="1"/>
</dbReference>
<dbReference type="PROSITE" id="PS01347">
    <property type="entry name" value="MRAY_1"/>
    <property type="match status" value="1"/>
</dbReference>
<dbReference type="PROSITE" id="PS01348">
    <property type="entry name" value="MRAY_2"/>
    <property type="match status" value="1"/>
</dbReference>
<reference key="1">
    <citation type="journal article" date="2009" name="Genome Biol.">
        <title>Genomic and genetic analyses of diversity and plant interactions of Pseudomonas fluorescens.</title>
        <authorList>
            <person name="Silby M.W."/>
            <person name="Cerdeno-Tarraga A.M."/>
            <person name="Vernikos G.S."/>
            <person name="Giddens S.R."/>
            <person name="Jackson R.W."/>
            <person name="Preston G.M."/>
            <person name="Zhang X.-X."/>
            <person name="Moon C.D."/>
            <person name="Gehrig S.M."/>
            <person name="Godfrey S.A.C."/>
            <person name="Knight C.G."/>
            <person name="Malone J.G."/>
            <person name="Robinson Z."/>
            <person name="Spiers A.J."/>
            <person name="Harris S."/>
            <person name="Challis G.L."/>
            <person name="Yaxley A.M."/>
            <person name="Harris D."/>
            <person name="Seeger K."/>
            <person name="Murphy L."/>
            <person name="Rutter S."/>
            <person name="Squares R."/>
            <person name="Quail M.A."/>
            <person name="Saunders E."/>
            <person name="Mavromatis K."/>
            <person name="Brettin T.S."/>
            <person name="Bentley S.D."/>
            <person name="Hothersall J."/>
            <person name="Stephens E."/>
            <person name="Thomas C.M."/>
            <person name="Parkhill J."/>
            <person name="Levy S.B."/>
            <person name="Rainey P.B."/>
            <person name="Thomson N.R."/>
        </authorList>
    </citation>
    <scope>NUCLEOTIDE SEQUENCE [LARGE SCALE GENOMIC DNA]</scope>
    <source>
        <strain>SBW25</strain>
    </source>
</reference>
<comment type="function">
    <text evidence="1">Catalyzes the initial step of the lipid cycle reactions in the biosynthesis of the cell wall peptidoglycan: transfers peptidoglycan precursor phospho-MurNAc-pentapeptide from UDP-MurNAc-pentapeptide onto the lipid carrier undecaprenyl phosphate, yielding undecaprenyl-pyrophosphoryl-MurNAc-pentapeptide, known as lipid I.</text>
</comment>
<comment type="catalytic activity">
    <reaction evidence="1">
        <text>UDP-N-acetyl-alpha-D-muramoyl-L-alanyl-gamma-D-glutamyl-meso-2,6-diaminopimeloyl-D-alanyl-D-alanine + di-trans,octa-cis-undecaprenyl phosphate = di-trans,octa-cis-undecaprenyl diphospho-N-acetyl-alpha-D-muramoyl-L-alanyl-D-glutamyl-meso-2,6-diaminopimeloyl-D-alanyl-D-alanine + UMP</text>
        <dbReference type="Rhea" id="RHEA:28386"/>
        <dbReference type="ChEBI" id="CHEBI:57865"/>
        <dbReference type="ChEBI" id="CHEBI:60392"/>
        <dbReference type="ChEBI" id="CHEBI:61386"/>
        <dbReference type="ChEBI" id="CHEBI:61387"/>
        <dbReference type="EC" id="2.7.8.13"/>
    </reaction>
</comment>
<comment type="cofactor">
    <cofactor evidence="1">
        <name>Mg(2+)</name>
        <dbReference type="ChEBI" id="CHEBI:18420"/>
    </cofactor>
</comment>
<comment type="pathway">
    <text evidence="1">Cell wall biogenesis; peptidoglycan biosynthesis.</text>
</comment>
<comment type="subcellular location">
    <subcellularLocation>
        <location evidence="1">Cell inner membrane</location>
        <topology evidence="1">Multi-pass membrane protein</topology>
    </subcellularLocation>
</comment>
<comment type="similarity">
    <text evidence="1">Belongs to the glycosyltransferase 4 family. MraY subfamily.</text>
</comment>
<accession>C3KCS7</accession>
<name>MRAY_PSEFS</name>
<proteinExistence type="inferred from homology"/>
<protein>
    <recommendedName>
        <fullName evidence="1">Phospho-N-acetylmuramoyl-pentapeptide-transferase</fullName>
        <ecNumber evidence="1">2.7.8.13</ecNumber>
    </recommendedName>
    <alternativeName>
        <fullName evidence="1">UDP-MurNAc-pentapeptide phosphotransferase</fullName>
    </alternativeName>
</protein>
<organism>
    <name type="scientific">Pseudomonas fluorescens (strain SBW25)</name>
    <dbReference type="NCBI Taxonomy" id="216595"/>
    <lineage>
        <taxon>Bacteria</taxon>
        <taxon>Pseudomonadati</taxon>
        <taxon>Pseudomonadota</taxon>
        <taxon>Gammaproteobacteria</taxon>
        <taxon>Pseudomonadales</taxon>
        <taxon>Pseudomonadaceae</taxon>
        <taxon>Pseudomonas</taxon>
    </lineage>
</organism>
<gene>
    <name evidence="1" type="primary">mraY</name>
    <name type="ordered locus">PFLU_0944</name>
</gene>
<feature type="chain" id="PRO_1000202075" description="Phospho-N-acetylmuramoyl-pentapeptide-transferase">
    <location>
        <begin position="1"/>
        <end position="360"/>
    </location>
</feature>
<feature type="transmembrane region" description="Helical" evidence="1">
    <location>
        <begin position="25"/>
        <end position="45"/>
    </location>
</feature>
<feature type="transmembrane region" description="Helical" evidence="1">
    <location>
        <begin position="73"/>
        <end position="93"/>
    </location>
</feature>
<feature type="transmembrane region" description="Helical" evidence="1">
    <location>
        <begin position="97"/>
        <end position="117"/>
    </location>
</feature>
<feature type="transmembrane region" description="Helical" evidence="1">
    <location>
        <begin position="142"/>
        <end position="162"/>
    </location>
</feature>
<feature type="transmembrane region" description="Helical" evidence="1">
    <location>
        <begin position="168"/>
        <end position="188"/>
    </location>
</feature>
<feature type="transmembrane region" description="Helical" evidence="1">
    <location>
        <begin position="199"/>
        <end position="219"/>
    </location>
</feature>
<feature type="transmembrane region" description="Helical" evidence="1">
    <location>
        <begin position="236"/>
        <end position="256"/>
    </location>
</feature>
<feature type="transmembrane region" description="Helical" evidence="1">
    <location>
        <begin position="263"/>
        <end position="283"/>
    </location>
</feature>
<feature type="transmembrane region" description="Helical" evidence="1">
    <location>
        <begin position="288"/>
        <end position="308"/>
    </location>
</feature>
<feature type="transmembrane region" description="Helical" evidence="1">
    <location>
        <begin position="338"/>
        <end position="358"/>
    </location>
</feature>
<sequence length="360" mass="39269">MLLLLAEYLQQFHKGFAVFQYLTLRGILGVLTALCLSLFLGPWMIRTLQNLQIGQSVRNDGPQSHLSKSGTPTMGGALILSSIGISTLLWADLHNRYVWVVLLVTLLFGAIGWVDDYRKVIEKNSKGLPSRWKYFWQSVFGVGAAIFLYTTAPSAVETTLIIPMLKDASIPLGIGFVVLTYFVIVGSSNAVNLTDGLDGLAIMPTVMVGGALGIFCYLSGNVKFAEYLLIPYVPGAGELIVFCGALIGAGLGFLWFNTYPAQVFMGDVGALALGAALGTIAVIVRQEIVLFIMGGVFVMETLSVVIQVASFKLTGRRVFRMAPIHHHFELKGWPEPRVIVRFWIITVILVLVGLATLKLR</sequence>
<evidence type="ECO:0000255" key="1">
    <source>
        <dbReference type="HAMAP-Rule" id="MF_00038"/>
    </source>
</evidence>